<comment type="function">
    <molecule>Isoform 1</molecule>
    <text evidence="3 4 5">Electrogenic Na+-coupled sugar symporter that actively transports D-mannose or D-fructose at the plasma membrane, with a Na+ to sugar coupling ratio of 1:1. Transporter activity is driven by a transmembrane Na+ electrochemical gradient set by the Na+/K+ pump. Exclusively recognizes sugar substrates having a pyranose ring with an axial hydroxyl group on carbon 2 (PubMed:22212718, PubMed:23451068, PubMed:24573086). Has likely evolved to enable renal reabsorption of D-mannose, an important constituent of oligosaccharide chains of glycoproteins. Contributes to dietary D-fructose reabsorption from glomerular filtrate across the brush border of the kidney (PubMed:22212718, PubMed:23451068).</text>
</comment>
<comment type="function">
    <molecule>Isoform 2</molecule>
    <text evidence="3">Appears to have no transporter activity.</text>
</comment>
<comment type="catalytic activity">
    <molecule>Isoform 1</molecule>
    <reaction evidence="3 5">
        <text>D-mannose(out) + Na(+)(out) = D-mannose(in) + Na(+)(in)</text>
        <dbReference type="Rhea" id="RHEA:72907"/>
        <dbReference type="ChEBI" id="CHEBI:4208"/>
        <dbReference type="ChEBI" id="CHEBI:29101"/>
    </reaction>
    <physiologicalReaction direction="left-to-right" evidence="1">
        <dbReference type="Rhea" id="RHEA:72908"/>
    </physiologicalReaction>
</comment>
<comment type="catalytic activity">
    <molecule>Isoform 1</molecule>
    <reaction evidence="3 4">
        <text>D-fructopyranose(out) + Na(+)(out) = D-fructopyranose(in) + Na(+)(in)</text>
        <dbReference type="Rhea" id="RHEA:72915"/>
        <dbReference type="ChEBI" id="CHEBI:29101"/>
        <dbReference type="ChEBI" id="CHEBI:37714"/>
    </reaction>
    <physiologicalReaction direction="left-to-right" evidence="1">
        <dbReference type="Rhea" id="RHEA:72916"/>
    </physiologicalReaction>
</comment>
<comment type="activity regulation">
    <molecule>Isoform 1</molecule>
    <text evidence="5">Inhibited by phlorizin.</text>
</comment>
<comment type="biophysicochemical properties">
    <molecule>Isoform 1</molecule>
    <kinetics>
        <KM evidence="3">0.45 mM for D-mannose</KM>
        <KM evidence="3">0.62 mM for D-fructopyranose</KM>
    </kinetics>
</comment>
<comment type="subcellular location">
    <subcellularLocation>
        <location evidence="1">Apical cell membrane</location>
        <topology evidence="2">Multi-pass membrane protein</topology>
    </subcellularLocation>
</comment>
<comment type="alternative products">
    <event type="alternative splicing"/>
    <isoform>
        <id>A0PJK1-1</id>
        <name>1</name>
        <name>IF2</name>
        <sequence type="displayed"/>
    </isoform>
    <isoform>
        <id>A0PJK1-2</id>
        <name>2</name>
        <name>IF3</name>
        <sequence type="described" ref="VSP_029417"/>
    </isoform>
    <isoform>
        <id>A0PJK1-3</id>
        <name>3</name>
        <sequence type="described" ref="VSP_029416 VSP_029417 VSP_029418 VSP_029419"/>
    </isoform>
    <isoform>
        <id>A0PJK1-4</id>
        <name>4</name>
        <name>IF1</name>
        <sequence type="described" ref="VSP_029418"/>
    </isoform>
    <isoform>
        <id>A0PJK1-5</id>
        <name>5</name>
        <name>IF4</name>
        <sequence type="described" ref="VSP_045061"/>
    </isoform>
</comment>
<comment type="tissue specificity">
    <text evidence="3">Predominantly expressed at high levels in kidney. Very low expression is detected in testes.</text>
</comment>
<comment type="tissue specificity">
    <molecule>Isoform 1</molecule>
    <text evidence="3">Expressed in kidney.</text>
</comment>
<comment type="tissue specificity">
    <molecule>Isoform 2</molecule>
    <text evidence="3">The most abundant isoform expressed in kidney.</text>
</comment>
<comment type="tissue specificity">
    <molecule>Isoform 4</molecule>
    <text evidence="3">Expressed in kidney.</text>
</comment>
<comment type="tissue specificity">
    <molecule>Isoform 5</molecule>
    <text evidence="3">Expressed in kidney.</text>
</comment>
<comment type="similarity">
    <text evidence="9">Belongs to the sodium:solute symporter (SSF) (TC 2.A.21) family.</text>
</comment>
<comment type="sequence caution" evidence="9">
    <conflict type="frameshift">
        <sequence resource="EMBL-CDS" id="BAB71619"/>
    </conflict>
</comment>
<proteinExistence type="evidence at protein level"/>
<keyword id="KW-0025">Alternative splicing</keyword>
<keyword id="KW-1003">Cell membrane</keyword>
<keyword id="KW-0325">Glycoprotein</keyword>
<keyword id="KW-0406">Ion transport</keyword>
<keyword id="KW-0472">Membrane</keyword>
<keyword id="KW-0597">Phosphoprotein</keyword>
<keyword id="KW-1267">Proteomics identification</keyword>
<keyword id="KW-1185">Reference proteome</keyword>
<keyword id="KW-0915">Sodium</keyword>
<keyword id="KW-0739">Sodium transport</keyword>
<keyword id="KW-0762">Sugar transport</keyword>
<keyword id="KW-0812">Transmembrane</keyword>
<keyword id="KW-1133">Transmembrane helix</keyword>
<keyword id="KW-0813">Transport</keyword>
<protein>
    <recommendedName>
        <fullName evidence="10 11">Sodium/mannose cotransporter SLC5A10</fullName>
    </recommendedName>
    <alternativeName>
        <fullName>Sodium/glucose cotransporter 5</fullName>
        <shortName>Na(+)/glucose cotransporter 5</shortName>
    </alternativeName>
    <alternativeName>
        <fullName>Solute carrier family 5 member 10</fullName>
    </alternativeName>
</protein>
<accession>A0PJK1</accession>
<accession>A8MUC9</accession>
<accession>B4DPI0</accession>
<accession>B7WPR4</accession>
<accession>Q6P5X0</accession>
<accession>Q8IXM4</accession>
<accession>Q96LQ1</accession>
<sequence length="596" mass="64342">MAANSTSDLHTPGTQLSVADIIVITVYFALNVAVGIWSSCRASRNTVNGYFLAGRDMTWWPIGASLFASSEGSGLFIGLAGSGAAGGLAVAGFEWNATYVLLALAWVFVPIYISSEIVTLPEYIQKRYGGQRIRMYLSVLSLLLSVFTKISLDLYAGALFVHICLGWNFYLSTILTLGITALYTIAGGLAAVIYTDALQTLIMVVGAVILTIKAFDQIGGYGQLEAAYAQAIPSRTIANTTCHLPRTDAMHMFRDPHTGDLPWTGMTFGLTIMATWYWCTDQVIVQRSLSARDLNHAKAGSILASYLKMLPMGLIIMPGMISRALFPDDVGCVVPSECLRACGAEVGCSNIAYPKLVMELMPIGLRGLMIAVMLAALMSSLTSIFNSSSTLFTMDIWRRLRPRSGERELLLVGRLVIVALIGVSVAWIPVLQDSNSGQLFIYMQSVTSSLAPPVTAVFVLGVFWRRANEQGAFWGLIAGLVVGATRLVLEFLNPAPPCGEPDTRPAVLGSIHYLHFAVALFALSGAVVVAGSLLTPPPQSVQIENLTWWTLAQDVPLGTKAGDGQTPQKHAFWARVCGFNAILLMCVNIFFYAYFA</sequence>
<organism>
    <name type="scientific">Homo sapiens</name>
    <name type="common">Human</name>
    <dbReference type="NCBI Taxonomy" id="9606"/>
    <lineage>
        <taxon>Eukaryota</taxon>
        <taxon>Metazoa</taxon>
        <taxon>Chordata</taxon>
        <taxon>Craniata</taxon>
        <taxon>Vertebrata</taxon>
        <taxon>Euteleostomi</taxon>
        <taxon>Mammalia</taxon>
        <taxon>Eutheria</taxon>
        <taxon>Euarchontoglires</taxon>
        <taxon>Primates</taxon>
        <taxon>Haplorrhini</taxon>
        <taxon>Catarrhini</taxon>
        <taxon>Hominidae</taxon>
        <taxon>Homo</taxon>
    </lineage>
</organism>
<reference key="1">
    <citation type="journal article" date="2004" name="Nat. Genet.">
        <title>Complete sequencing and characterization of 21,243 full-length human cDNAs.</title>
        <authorList>
            <person name="Ota T."/>
            <person name="Suzuki Y."/>
            <person name="Nishikawa T."/>
            <person name="Otsuki T."/>
            <person name="Sugiyama T."/>
            <person name="Irie R."/>
            <person name="Wakamatsu A."/>
            <person name="Hayashi K."/>
            <person name="Sato H."/>
            <person name="Nagai K."/>
            <person name="Kimura K."/>
            <person name="Makita H."/>
            <person name="Sekine M."/>
            <person name="Obayashi M."/>
            <person name="Nishi T."/>
            <person name="Shibahara T."/>
            <person name="Tanaka T."/>
            <person name="Ishii S."/>
            <person name="Yamamoto J."/>
            <person name="Saito K."/>
            <person name="Kawai Y."/>
            <person name="Isono Y."/>
            <person name="Nakamura Y."/>
            <person name="Nagahari K."/>
            <person name="Murakami K."/>
            <person name="Yasuda T."/>
            <person name="Iwayanagi T."/>
            <person name="Wagatsuma M."/>
            <person name="Shiratori A."/>
            <person name="Sudo H."/>
            <person name="Hosoiri T."/>
            <person name="Kaku Y."/>
            <person name="Kodaira H."/>
            <person name="Kondo H."/>
            <person name="Sugawara M."/>
            <person name="Takahashi M."/>
            <person name="Kanda K."/>
            <person name="Yokoi T."/>
            <person name="Furuya T."/>
            <person name="Kikkawa E."/>
            <person name="Omura Y."/>
            <person name="Abe K."/>
            <person name="Kamihara K."/>
            <person name="Katsuta N."/>
            <person name="Sato K."/>
            <person name="Tanikawa M."/>
            <person name="Yamazaki M."/>
            <person name="Ninomiya K."/>
            <person name="Ishibashi T."/>
            <person name="Yamashita H."/>
            <person name="Murakawa K."/>
            <person name="Fujimori K."/>
            <person name="Tanai H."/>
            <person name="Kimata M."/>
            <person name="Watanabe M."/>
            <person name="Hiraoka S."/>
            <person name="Chiba Y."/>
            <person name="Ishida S."/>
            <person name="Ono Y."/>
            <person name="Takiguchi S."/>
            <person name="Watanabe S."/>
            <person name="Yosida M."/>
            <person name="Hotuta T."/>
            <person name="Kusano J."/>
            <person name="Kanehori K."/>
            <person name="Takahashi-Fujii A."/>
            <person name="Hara H."/>
            <person name="Tanase T.-O."/>
            <person name="Nomura Y."/>
            <person name="Togiya S."/>
            <person name="Komai F."/>
            <person name="Hara R."/>
            <person name="Takeuchi K."/>
            <person name="Arita M."/>
            <person name="Imose N."/>
            <person name="Musashino K."/>
            <person name="Yuuki H."/>
            <person name="Oshima A."/>
            <person name="Sasaki N."/>
            <person name="Aotsuka S."/>
            <person name="Yoshikawa Y."/>
            <person name="Matsunawa H."/>
            <person name="Ichihara T."/>
            <person name="Shiohata N."/>
            <person name="Sano S."/>
            <person name="Moriya S."/>
            <person name="Momiyama H."/>
            <person name="Satoh N."/>
            <person name="Takami S."/>
            <person name="Terashima Y."/>
            <person name="Suzuki O."/>
            <person name="Nakagawa S."/>
            <person name="Senoh A."/>
            <person name="Mizoguchi H."/>
            <person name="Goto Y."/>
            <person name="Shimizu F."/>
            <person name="Wakebe H."/>
            <person name="Hishigaki H."/>
            <person name="Watanabe T."/>
            <person name="Sugiyama A."/>
            <person name="Takemoto M."/>
            <person name="Kawakami B."/>
            <person name="Yamazaki M."/>
            <person name="Watanabe K."/>
            <person name="Kumagai A."/>
            <person name="Itakura S."/>
            <person name="Fukuzumi Y."/>
            <person name="Fujimori Y."/>
            <person name="Komiyama M."/>
            <person name="Tashiro H."/>
            <person name="Tanigami A."/>
            <person name="Fujiwara T."/>
            <person name="Ono T."/>
            <person name="Yamada K."/>
            <person name="Fujii Y."/>
            <person name="Ozaki K."/>
            <person name="Hirao M."/>
            <person name="Ohmori Y."/>
            <person name="Kawabata A."/>
            <person name="Hikiji T."/>
            <person name="Kobatake N."/>
            <person name="Inagaki H."/>
            <person name="Ikema Y."/>
            <person name="Okamoto S."/>
            <person name="Okitani R."/>
            <person name="Kawakami T."/>
            <person name="Noguchi S."/>
            <person name="Itoh T."/>
            <person name="Shigeta K."/>
            <person name="Senba T."/>
            <person name="Matsumura K."/>
            <person name="Nakajima Y."/>
            <person name="Mizuno T."/>
            <person name="Morinaga M."/>
            <person name="Sasaki M."/>
            <person name="Togashi T."/>
            <person name="Oyama M."/>
            <person name="Hata H."/>
            <person name="Watanabe M."/>
            <person name="Komatsu T."/>
            <person name="Mizushima-Sugano J."/>
            <person name="Satoh T."/>
            <person name="Shirai Y."/>
            <person name="Takahashi Y."/>
            <person name="Nakagawa K."/>
            <person name="Okumura K."/>
            <person name="Nagase T."/>
            <person name="Nomura N."/>
            <person name="Kikuchi H."/>
            <person name="Masuho Y."/>
            <person name="Yamashita R."/>
            <person name="Nakai K."/>
            <person name="Yada T."/>
            <person name="Nakamura Y."/>
            <person name="Ohara O."/>
            <person name="Isogai T."/>
            <person name="Sugano S."/>
        </authorList>
    </citation>
    <scope>NUCLEOTIDE SEQUENCE [LARGE SCALE MRNA] (ISOFORMS 4 AND 5)</scope>
    <source>
        <tissue>Kidney</tissue>
    </source>
</reference>
<reference key="2">
    <citation type="journal article" date="2006" name="Nature">
        <title>DNA sequence of human chromosome 17 and analysis of rearrangement in the human lineage.</title>
        <authorList>
            <person name="Zody M.C."/>
            <person name="Garber M."/>
            <person name="Adams D.J."/>
            <person name="Sharpe T."/>
            <person name="Harrow J."/>
            <person name="Lupski J.R."/>
            <person name="Nicholson C."/>
            <person name="Searle S.M."/>
            <person name="Wilming L."/>
            <person name="Young S.K."/>
            <person name="Abouelleil A."/>
            <person name="Allen N.R."/>
            <person name="Bi W."/>
            <person name="Bloom T."/>
            <person name="Borowsky M.L."/>
            <person name="Bugalter B.E."/>
            <person name="Butler J."/>
            <person name="Chang J.L."/>
            <person name="Chen C.-K."/>
            <person name="Cook A."/>
            <person name="Corum B."/>
            <person name="Cuomo C.A."/>
            <person name="de Jong P.J."/>
            <person name="DeCaprio D."/>
            <person name="Dewar K."/>
            <person name="FitzGerald M."/>
            <person name="Gilbert J."/>
            <person name="Gibson R."/>
            <person name="Gnerre S."/>
            <person name="Goldstein S."/>
            <person name="Grafham D.V."/>
            <person name="Grocock R."/>
            <person name="Hafez N."/>
            <person name="Hagopian D.S."/>
            <person name="Hart E."/>
            <person name="Norman C.H."/>
            <person name="Humphray S."/>
            <person name="Jaffe D.B."/>
            <person name="Jones M."/>
            <person name="Kamal M."/>
            <person name="Khodiyar V.K."/>
            <person name="LaButti K."/>
            <person name="Laird G."/>
            <person name="Lehoczky J."/>
            <person name="Liu X."/>
            <person name="Lokyitsang T."/>
            <person name="Loveland J."/>
            <person name="Lui A."/>
            <person name="Macdonald P."/>
            <person name="Major J.E."/>
            <person name="Matthews L."/>
            <person name="Mauceli E."/>
            <person name="McCarroll S.A."/>
            <person name="Mihalev A.H."/>
            <person name="Mudge J."/>
            <person name="Nguyen C."/>
            <person name="Nicol R."/>
            <person name="O'Leary S.B."/>
            <person name="Osoegawa K."/>
            <person name="Schwartz D.C."/>
            <person name="Shaw-Smith C."/>
            <person name="Stankiewicz P."/>
            <person name="Steward C."/>
            <person name="Swarbreck D."/>
            <person name="Venkataraman V."/>
            <person name="Whittaker C.A."/>
            <person name="Yang X."/>
            <person name="Zimmer A.R."/>
            <person name="Bradley A."/>
            <person name="Hubbard T."/>
            <person name="Birren B.W."/>
            <person name="Rogers J."/>
            <person name="Lander E.S."/>
            <person name="Nusbaum C."/>
        </authorList>
    </citation>
    <scope>NUCLEOTIDE SEQUENCE [LARGE SCALE GENOMIC DNA]</scope>
</reference>
<reference key="3">
    <citation type="journal article" date="2004" name="Genome Res.">
        <title>The status, quality, and expansion of the NIH full-length cDNA project: the Mammalian Gene Collection (MGC).</title>
        <authorList>
            <consortium name="The MGC Project Team"/>
        </authorList>
    </citation>
    <scope>NUCLEOTIDE SEQUENCE [LARGE SCALE MRNA] (ISOFORM 3)</scope>
    <scope>NUCLEOTIDE SEQUENCE [LARGE SCALE MRNA] OF 3-596 (ISOFORM 2)</scope>
    <scope>NUCLEOTIDE SEQUENCE [LARGE SCALE MRNA] OF 6-596 (ISOFORM 1)</scope>
    <source>
        <tissue>Brain</tissue>
        <tissue>Colon</tissue>
    </source>
</reference>
<reference key="4">
    <citation type="journal article" date="2009" name="Sci. Signal.">
        <title>Quantitative phosphoproteomic analysis of T cell receptor signaling reveals system-wide modulation of protein-protein interactions.</title>
        <authorList>
            <person name="Mayya V."/>
            <person name="Lundgren D.H."/>
            <person name="Hwang S.-I."/>
            <person name="Rezaul K."/>
            <person name="Wu L."/>
            <person name="Eng J.K."/>
            <person name="Rodionov V."/>
            <person name="Han D.K."/>
        </authorList>
    </citation>
    <scope>PHOSPHORYLATION [LARGE SCALE ANALYSIS] AT SER-141; SER-145 AND THR-148</scope>
    <scope>IDENTIFICATION BY MASS SPECTROMETRY [LARGE SCALE ANALYSIS]</scope>
    <source>
        <tissue>Leukemic T-cell</tissue>
    </source>
</reference>
<reference key="5">
    <citation type="journal article" date="2012" name="FEBS Lett.">
        <title>Functional characterisation of human SGLT-5 as a novel kidney-specific sodium-dependent sugar transporter.</title>
        <authorList>
            <person name="Grempler R."/>
            <person name="Augustin R."/>
            <person name="Froehner S."/>
            <person name="Hildebrandt T."/>
            <person name="Simon E."/>
            <person name="Mark M."/>
            <person name="Eickelmann P."/>
        </authorList>
    </citation>
    <scope>FUNCTION (ISOFORMS 1 AND 2)</scope>
    <scope>TRANSPORT ACTIVITY (ISOFORM 1)</scope>
    <scope>BIOPHYSICOCHEMICAL PROPERTIES (ISOFORM 1)</scope>
    <scope>TISSUE SPECIFICITY (ISOFORMS 1; 2; 4 AND 5)</scope>
    <scope>ALTERNATIVE SPLICING (ISOFORMS 1; 2; 4 AND 5)</scope>
</reference>
<reference key="6">
    <citation type="journal article" date="2013" name="PLoS ONE">
        <title>SGLT5 reabsorbs fructose in the kidney but its deficiency paradoxically exacerbates hepatic steatosis induced by fructose.</title>
        <authorList>
            <person name="Fukuzawa T."/>
            <person name="Fukazawa M."/>
            <person name="Ueda O."/>
            <person name="Shimada H."/>
            <person name="Kito A."/>
            <person name="Kakefuda M."/>
            <person name="Kawase Y."/>
            <person name="Wada N.A."/>
            <person name="Goto C."/>
            <person name="Fukushima N."/>
            <person name="Jishage K."/>
            <person name="Honda K."/>
            <person name="King G.L."/>
            <person name="Kawabe Y."/>
        </authorList>
    </citation>
    <scope>FUNCTION (ISOFORM 1)</scope>
    <scope>TRANSPORT ACTIVITY (ISOFORM 1)</scope>
</reference>
<reference key="7">
    <citation type="journal article" date="2014" name="Am. J. Physiol.">
        <title>Fingerprints of hSGLT5 sugar and cation selectivity.</title>
        <authorList>
            <person name="Ghezzi C."/>
            <person name="Gorraitz E."/>
            <person name="Hirayama B.A."/>
            <person name="Loo D.D."/>
            <person name="Grempler R."/>
            <person name="Mayoux E."/>
            <person name="Wright E.M."/>
        </authorList>
    </citation>
    <scope>FUNCTION (ISOFORM 1)</scope>
    <scope>TRANSPORT ACTIVITY (ISOFORM 1)</scope>
    <scope>ACTIVITY REGULATION (ISOFORM 1)</scope>
</reference>
<gene>
    <name type="primary">SLC5A10</name>
    <name evidence="8" type="synonym">SGLT5</name>
</gene>
<name>SC5AA_HUMAN</name>
<dbReference type="EMBL" id="AK057946">
    <property type="protein sequence ID" value="BAB71619.1"/>
    <property type="status" value="ALT_SEQ"/>
    <property type="molecule type" value="mRNA"/>
</dbReference>
<dbReference type="EMBL" id="AK298345">
    <property type="protein sequence ID" value="BAG60592.1"/>
    <property type="molecule type" value="mRNA"/>
</dbReference>
<dbReference type="EMBL" id="AC003957">
    <property type="status" value="NOT_ANNOTATED_CDS"/>
    <property type="molecule type" value="Genomic_DNA"/>
</dbReference>
<dbReference type="EMBL" id="AC090286">
    <property type="status" value="NOT_ANNOTATED_CDS"/>
    <property type="molecule type" value="Genomic_DNA"/>
</dbReference>
<dbReference type="EMBL" id="BC034380">
    <property type="protein sequence ID" value="AAH34380.1"/>
    <property type="molecule type" value="mRNA"/>
</dbReference>
<dbReference type="EMBL" id="BC039868">
    <property type="protein sequence ID" value="AAH39868.1"/>
    <property type="molecule type" value="mRNA"/>
</dbReference>
<dbReference type="EMBL" id="BC062617">
    <property type="protein sequence ID" value="AAH62617.1"/>
    <property type="molecule type" value="mRNA"/>
</dbReference>
<dbReference type="CCDS" id="CCDS11201.2">
    <molecule id="A0PJK1-4"/>
</dbReference>
<dbReference type="CCDS" id="CCDS42275.1">
    <molecule id="A0PJK1-1"/>
</dbReference>
<dbReference type="CCDS" id="CCDS59277.1">
    <molecule id="A0PJK1-5"/>
</dbReference>
<dbReference type="CCDS" id="CCDS59278.1">
    <molecule id="A0PJK1-2"/>
</dbReference>
<dbReference type="CCDS" id="CCDS74008.1">
    <molecule id="A0PJK1-3"/>
</dbReference>
<dbReference type="RefSeq" id="NP_001035915.1">
    <molecule id="A0PJK1-1"/>
    <property type="nucleotide sequence ID" value="NM_001042450.4"/>
</dbReference>
<dbReference type="RefSeq" id="NP_001257577.1">
    <molecule id="A0PJK1-2"/>
    <property type="nucleotide sequence ID" value="NM_001270648.3"/>
</dbReference>
<dbReference type="RefSeq" id="NP_001257578.1">
    <molecule id="A0PJK1-5"/>
    <property type="nucleotide sequence ID" value="NM_001270649.2"/>
</dbReference>
<dbReference type="RefSeq" id="NP_001269346.1">
    <molecule id="A0PJK1-3"/>
    <property type="nucleotide sequence ID" value="NM_001282417.1"/>
</dbReference>
<dbReference type="RefSeq" id="NP_689564.3">
    <molecule id="A0PJK1-4"/>
    <property type="nucleotide sequence ID" value="NM_152351.4"/>
</dbReference>
<dbReference type="SMR" id="A0PJK1"/>
<dbReference type="BioGRID" id="125922">
    <property type="interactions" value="7"/>
</dbReference>
<dbReference type="FunCoup" id="A0PJK1">
    <property type="interactions" value="38"/>
</dbReference>
<dbReference type="IntAct" id="A0PJK1">
    <property type="interactions" value="2"/>
</dbReference>
<dbReference type="STRING" id="9606.ENSP00000379008"/>
<dbReference type="DrugCentral" id="A0PJK1"/>
<dbReference type="TCDB" id="2.A.21.3.15">
    <property type="family name" value="the solute:sodium symporter (sss) family"/>
</dbReference>
<dbReference type="GlyCosmos" id="A0PJK1">
    <property type="glycosylation" value="2 sites, No reported glycans"/>
</dbReference>
<dbReference type="GlyGen" id="A0PJK1">
    <property type="glycosylation" value="4 sites, 5 N-linked glycans (2 sites)"/>
</dbReference>
<dbReference type="iPTMnet" id="A0PJK1"/>
<dbReference type="PhosphoSitePlus" id="A0PJK1"/>
<dbReference type="BioMuta" id="SLC5A10"/>
<dbReference type="jPOST" id="A0PJK1"/>
<dbReference type="MassIVE" id="A0PJK1"/>
<dbReference type="PaxDb" id="9606-ENSP00000379008"/>
<dbReference type="PeptideAtlas" id="A0PJK1"/>
<dbReference type="ProteomicsDB" id="4787"/>
<dbReference type="ProteomicsDB" id="57">
    <molecule id="A0PJK1-1"/>
</dbReference>
<dbReference type="ProteomicsDB" id="58">
    <molecule id="A0PJK1-2"/>
</dbReference>
<dbReference type="ProteomicsDB" id="59">
    <molecule id="A0PJK1-3"/>
</dbReference>
<dbReference type="ProteomicsDB" id="60">
    <molecule id="A0PJK1-4"/>
</dbReference>
<dbReference type="Antibodypedia" id="13581">
    <property type="antibodies" value="85 antibodies from 26 providers"/>
</dbReference>
<dbReference type="DNASU" id="125206"/>
<dbReference type="Ensembl" id="ENST00000317977.10">
    <molecule id="A0PJK1-3"/>
    <property type="protein sequence ID" value="ENSP00000324346.6"/>
    <property type="gene ID" value="ENSG00000154025.16"/>
</dbReference>
<dbReference type="Ensembl" id="ENST00000395643.6">
    <molecule id="A0PJK1-2"/>
    <property type="protein sequence ID" value="ENSP00000379005.2"/>
    <property type="gene ID" value="ENSG00000154025.16"/>
</dbReference>
<dbReference type="Ensembl" id="ENST00000395645.4">
    <molecule id="A0PJK1-1"/>
    <property type="protein sequence ID" value="ENSP00000379007.3"/>
    <property type="gene ID" value="ENSG00000154025.16"/>
</dbReference>
<dbReference type="Ensembl" id="ENST00000395647.6">
    <molecule id="A0PJK1-4"/>
    <property type="protein sequence ID" value="ENSP00000379008.2"/>
    <property type="gene ID" value="ENSG00000154025.16"/>
</dbReference>
<dbReference type="Ensembl" id="ENST00000417251.6">
    <molecule id="A0PJK1-5"/>
    <property type="protein sequence ID" value="ENSP00000401875.2"/>
    <property type="gene ID" value="ENSG00000154025.16"/>
</dbReference>
<dbReference type="GeneID" id="125206"/>
<dbReference type="KEGG" id="hsa:125206"/>
<dbReference type="MANE-Select" id="ENST00000395645.4">
    <property type="protein sequence ID" value="ENSP00000379007.3"/>
    <property type="RefSeq nucleotide sequence ID" value="NM_001042450.4"/>
    <property type="RefSeq protein sequence ID" value="NP_001035915.1"/>
</dbReference>
<dbReference type="UCSC" id="uc002gur.3">
    <molecule id="A0PJK1-1"/>
    <property type="organism name" value="human"/>
</dbReference>
<dbReference type="AGR" id="HGNC:23155"/>
<dbReference type="CTD" id="125206"/>
<dbReference type="DisGeNET" id="125206"/>
<dbReference type="GeneCards" id="SLC5A10"/>
<dbReference type="HGNC" id="HGNC:23155">
    <property type="gene designation" value="SLC5A10"/>
</dbReference>
<dbReference type="HPA" id="ENSG00000154025">
    <property type="expression patterns" value="Tissue enriched (kidney)"/>
</dbReference>
<dbReference type="MIM" id="618636">
    <property type="type" value="gene"/>
</dbReference>
<dbReference type="neXtProt" id="NX_A0PJK1"/>
<dbReference type="OpenTargets" id="ENSG00000154025"/>
<dbReference type="PharmGKB" id="PA134940254"/>
<dbReference type="VEuPathDB" id="HostDB:ENSG00000154025"/>
<dbReference type="eggNOG" id="KOG2349">
    <property type="taxonomic scope" value="Eukaryota"/>
</dbReference>
<dbReference type="GeneTree" id="ENSGT00940000159416"/>
<dbReference type="HOGENOM" id="CLU_018808_9_2_1"/>
<dbReference type="InParanoid" id="A0PJK1"/>
<dbReference type="OMA" id="LFGGMWS"/>
<dbReference type="OrthoDB" id="6132759at2759"/>
<dbReference type="PAN-GO" id="A0PJK1">
    <property type="GO annotations" value="4 GO annotations based on evolutionary models"/>
</dbReference>
<dbReference type="PhylomeDB" id="A0PJK1"/>
<dbReference type="TreeFam" id="TF352855"/>
<dbReference type="PathwayCommons" id="A0PJK1"/>
<dbReference type="Reactome" id="R-HSA-189200">
    <property type="pathway name" value="Cellular hexose transport"/>
</dbReference>
<dbReference type="BioGRID-ORCS" id="125206">
    <property type="hits" value="21 hits in 1146 CRISPR screens"/>
</dbReference>
<dbReference type="ChiTaRS" id="SLC5A10">
    <property type="organism name" value="human"/>
</dbReference>
<dbReference type="GenomeRNAi" id="125206"/>
<dbReference type="Pharos" id="A0PJK1">
    <property type="development level" value="Tbio"/>
</dbReference>
<dbReference type="PRO" id="PR:A0PJK1"/>
<dbReference type="Proteomes" id="UP000005640">
    <property type="component" value="Chromosome 17"/>
</dbReference>
<dbReference type="RNAct" id="A0PJK1">
    <property type="molecule type" value="protein"/>
</dbReference>
<dbReference type="Bgee" id="ENSG00000154025">
    <property type="expression patterns" value="Expressed in kidney epithelium and 90 other cell types or tissues"/>
</dbReference>
<dbReference type="GO" id="GO:0016324">
    <property type="term" value="C:apical plasma membrane"/>
    <property type="evidence" value="ECO:0007669"/>
    <property type="project" value="UniProtKB-SubCell"/>
</dbReference>
<dbReference type="GO" id="GO:0070062">
    <property type="term" value="C:extracellular exosome"/>
    <property type="evidence" value="ECO:0007005"/>
    <property type="project" value="UniProtKB"/>
</dbReference>
<dbReference type="GO" id="GO:0005886">
    <property type="term" value="C:plasma membrane"/>
    <property type="evidence" value="ECO:0000318"/>
    <property type="project" value="GO_Central"/>
</dbReference>
<dbReference type="GO" id="GO:0005412">
    <property type="term" value="F:D-glucose:sodium symporter activity"/>
    <property type="evidence" value="ECO:0000318"/>
    <property type="project" value="GO_Central"/>
</dbReference>
<dbReference type="GO" id="GO:0140930">
    <property type="term" value="F:fructose:sodium symporter activity"/>
    <property type="evidence" value="ECO:0000314"/>
    <property type="project" value="UniProtKB"/>
</dbReference>
<dbReference type="GO" id="GO:0140929">
    <property type="term" value="F:mannose:sodium symporter activity"/>
    <property type="evidence" value="ECO:0000314"/>
    <property type="project" value="UniProtKB"/>
</dbReference>
<dbReference type="GO" id="GO:0015370">
    <property type="term" value="F:solute:sodium symporter activity"/>
    <property type="evidence" value="ECO:0000304"/>
    <property type="project" value="Reactome"/>
</dbReference>
<dbReference type="GO" id="GO:0008645">
    <property type="term" value="P:hexose transmembrane transport"/>
    <property type="evidence" value="ECO:0000304"/>
    <property type="project" value="Reactome"/>
</dbReference>
<dbReference type="CDD" id="cd11489">
    <property type="entry name" value="SLC5sbd_SGLT5"/>
    <property type="match status" value="1"/>
</dbReference>
<dbReference type="FunFam" id="1.20.1730.10:FF:000020">
    <property type="entry name" value="sodium/glucose cotransporter 5 isoform X2"/>
    <property type="match status" value="1"/>
</dbReference>
<dbReference type="FunFam" id="1.20.1730.10:FF:000019">
    <property type="entry name" value="Solute carrier family 5 member 10"/>
    <property type="match status" value="1"/>
</dbReference>
<dbReference type="Gene3D" id="1.20.1730.10">
    <property type="entry name" value="Sodium/glucose cotransporter"/>
    <property type="match status" value="1"/>
</dbReference>
<dbReference type="InterPro" id="IPR038377">
    <property type="entry name" value="Na/Glc_symporter_sf"/>
</dbReference>
<dbReference type="InterPro" id="IPR001734">
    <property type="entry name" value="Na/solute_symporter"/>
</dbReference>
<dbReference type="InterPro" id="IPR018212">
    <property type="entry name" value="Na/solute_symporter_CS"/>
</dbReference>
<dbReference type="NCBIfam" id="TIGR00813">
    <property type="entry name" value="sss"/>
    <property type="match status" value="1"/>
</dbReference>
<dbReference type="PANTHER" id="PTHR11819:SF128">
    <property type="entry name" value="SODIUM_MANNOSE COTRANSPORTER SLC5A10"/>
    <property type="match status" value="1"/>
</dbReference>
<dbReference type="PANTHER" id="PTHR11819">
    <property type="entry name" value="SOLUTE CARRIER FAMILY 5"/>
    <property type="match status" value="1"/>
</dbReference>
<dbReference type="Pfam" id="PF00474">
    <property type="entry name" value="SSF"/>
    <property type="match status" value="1"/>
</dbReference>
<dbReference type="PROSITE" id="PS00457">
    <property type="entry name" value="NA_SOLUT_SYMP_2"/>
    <property type="match status" value="1"/>
</dbReference>
<dbReference type="PROSITE" id="PS50283">
    <property type="entry name" value="NA_SOLUT_SYMP_3"/>
    <property type="match status" value="1"/>
</dbReference>
<feature type="chain" id="PRO_0000311211" description="Sodium/mannose cotransporter SLC5A10">
    <location>
        <begin position="1"/>
        <end position="596"/>
    </location>
</feature>
<feature type="topological domain" description="Extracellular" evidence="2">
    <location>
        <begin position="1"/>
        <end position="15"/>
    </location>
</feature>
<feature type="transmembrane region" description="Helical" evidence="2">
    <location>
        <begin position="16"/>
        <end position="36"/>
    </location>
</feature>
<feature type="topological domain" description="Cytoplasmic" evidence="2">
    <location>
        <begin position="37"/>
        <end position="72"/>
    </location>
</feature>
<feature type="transmembrane region" description="Helical" evidence="2">
    <location>
        <begin position="73"/>
        <end position="93"/>
    </location>
</feature>
<feature type="topological domain" description="Extracellular" evidence="2">
    <location>
        <begin position="94"/>
        <end position="99"/>
    </location>
</feature>
<feature type="transmembrane region" description="Helical" evidence="2">
    <location>
        <begin position="100"/>
        <end position="120"/>
    </location>
</feature>
<feature type="topological domain" description="Cytoplasmic" evidence="2">
    <location>
        <begin position="121"/>
        <end position="149"/>
    </location>
</feature>
<feature type="transmembrane region" description="Helical" evidence="2">
    <location>
        <begin position="150"/>
        <end position="170"/>
    </location>
</feature>
<feature type="topological domain" description="Extracellular" evidence="2">
    <location>
        <begin position="171"/>
        <end position="173"/>
    </location>
</feature>
<feature type="transmembrane region" description="Helical" evidence="2">
    <location>
        <begin position="174"/>
        <end position="194"/>
    </location>
</feature>
<feature type="topological domain" description="Cytoplasmic" evidence="2">
    <location>
        <begin position="195"/>
        <end position="200"/>
    </location>
</feature>
<feature type="transmembrane region" description="Helical" evidence="2">
    <location>
        <begin position="201"/>
        <end position="221"/>
    </location>
</feature>
<feature type="topological domain" description="Extracellular" evidence="2">
    <location>
        <begin position="222"/>
        <end position="264"/>
    </location>
</feature>
<feature type="transmembrane region" description="Helical" evidence="2">
    <location>
        <begin position="265"/>
        <end position="285"/>
    </location>
</feature>
<feature type="topological domain" description="Cytoplasmic" evidence="2">
    <location>
        <begin position="286"/>
        <end position="300"/>
    </location>
</feature>
<feature type="transmembrane region" description="Helical" evidence="2">
    <location>
        <begin position="301"/>
        <end position="321"/>
    </location>
</feature>
<feature type="topological domain" description="Extracellular" evidence="2">
    <location>
        <begin position="322"/>
        <end position="355"/>
    </location>
</feature>
<feature type="transmembrane region" description="Helical" evidence="2">
    <location>
        <begin position="356"/>
        <end position="376"/>
    </location>
</feature>
<feature type="topological domain" description="Cytoplasmic" evidence="2">
    <location>
        <begin position="377"/>
        <end position="409"/>
    </location>
</feature>
<feature type="transmembrane region" description="Helical" evidence="2">
    <location>
        <begin position="410"/>
        <end position="430"/>
    </location>
</feature>
<feature type="topological domain" description="Extracellular" evidence="2">
    <location>
        <begin position="431"/>
        <end position="443"/>
    </location>
</feature>
<feature type="transmembrane region" description="Helical" evidence="2">
    <location>
        <begin position="444"/>
        <end position="464"/>
    </location>
</feature>
<feature type="topological domain" description="Cytoplasmic" evidence="2">
    <location>
        <begin position="465"/>
        <end position="471"/>
    </location>
</feature>
<feature type="transmembrane region" description="Helical" evidence="2">
    <location>
        <begin position="472"/>
        <end position="492"/>
    </location>
</feature>
<feature type="topological domain" description="Extracellular" evidence="2">
    <location>
        <begin position="493"/>
        <end position="513"/>
    </location>
</feature>
<feature type="transmembrane region" description="Helical" evidence="2">
    <location>
        <begin position="514"/>
        <end position="534"/>
    </location>
</feature>
<feature type="topological domain" description="Cytoplasmic" evidence="2">
    <location>
        <begin position="535"/>
        <end position="575"/>
    </location>
</feature>
<feature type="transmembrane region" description="Helical" evidence="2">
    <location>
        <begin position="576"/>
        <end position="596"/>
    </location>
</feature>
<feature type="modified residue" description="Phosphoserine" evidence="12">
    <location>
        <position position="141"/>
    </location>
</feature>
<feature type="modified residue" description="Phosphoserine" evidence="12">
    <location>
        <position position="145"/>
    </location>
</feature>
<feature type="modified residue" description="Phosphothreonine" evidence="12">
    <location>
        <position position="148"/>
    </location>
</feature>
<feature type="glycosylation site" description="N-linked (GlcNAc...) asparagine" evidence="2">
    <location>
        <position position="4"/>
    </location>
</feature>
<feature type="glycosylation site" description="N-linked (GlcNAc...) asparagine" evidence="2">
    <location>
        <position position="96"/>
    </location>
</feature>
<feature type="splice variant" id="VSP_029416" description="In isoform 3." evidence="7">
    <location>
        <begin position="1"/>
        <end position="56"/>
    </location>
</feature>
<feature type="splice variant" id="VSP_029417" description="In isoform 2 and isoform 3." evidence="7">
    <location>
        <begin position="187"/>
        <end position="213"/>
    </location>
</feature>
<feature type="splice variant" id="VSP_029418" description="In isoform 3 and isoform 4." evidence="6 7">
    <original>P</original>
    <variation>PGAHVYEERHQVSVSRT</variation>
    <location>
        <position position="327"/>
    </location>
</feature>
<feature type="splice variant" id="VSP_045061" description="In isoform 5." evidence="6">
    <location>
        <begin position="328"/>
        <end position="363"/>
    </location>
</feature>
<feature type="splice variant" id="VSP_029419" description="In isoform 3." evidence="7">
    <original>R</original>
    <variation>RTGIPSTPPAPQSRLSFLLPETPPLERYLLGLVVMDLW</variation>
    <location>
        <position position="414"/>
    </location>
</feature>
<feature type="sequence variant" id="VAR_052493" description="In dbSNP:rs12604020.">
    <original>A</original>
    <variation>V</variation>
    <location>
        <position position="522"/>
    </location>
</feature>
<evidence type="ECO:0000250" key="1">
    <source>
        <dbReference type="UniProtKB" id="Q5SWY8"/>
    </source>
</evidence>
<evidence type="ECO:0000255" key="2"/>
<evidence type="ECO:0000269" key="3">
    <source>
    </source>
</evidence>
<evidence type="ECO:0000269" key="4">
    <source>
    </source>
</evidence>
<evidence type="ECO:0000269" key="5">
    <source>
    </source>
</evidence>
<evidence type="ECO:0000303" key="6">
    <source>
    </source>
</evidence>
<evidence type="ECO:0000303" key="7">
    <source>
    </source>
</evidence>
<evidence type="ECO:0000303" key="8">
    <source>
    </source>
</evidence>
<evidence type="ECO:0000305" key="9"/>
<evidence type="ECO:0000305" key="10">
    <source>
    </source>
</evidence>
<evidence type="ECO:0000305" key="11">
    <source>
    </source>
</evidence>
<evidence type="ECO:0007744" key="12">
    <source>
    </source>
</evidence>